<feature type="chain" id="PRO_0000349286" description="Modulator of macroautophagy TMEM150B">
    <location>
        <begin position="1"/>
        <end position="232"/>
    </location>
</feature>
<feature type="topological domain" description="Cytoplasmic" evidence="4">
    <location>
        <begin position="1"/>
        <end position="6"/>
    </location>
</feature>
<feature type="transmembrane region" description="Helical" evidence="3">
    <location>
        <begin position="7"/>
        <end position="27"/>
    </location>
</feature>
<feature type="topological domain" description="Extracellular" evidence="4">
    <location>
        <begin position="28"/>
        <end position="50"/>
    </location>
</feature>
<feature type="transmembrane region" description="Helical" evidence="3">
    <location>
        <begin position="51"/>
        <end position="71"/>
    </location>
</feature>
<feature type="topological domain" description="Cytoplasmic" evidence="4">
    <location>
        <begin position="72"/>
        <end position="83"/>
    </location>
</feature>
<feature type="transmembrane region" description="Helical" evidence="3">
    <location>
        <begin position="84"/>
        <end position="104"/>
    </location>
</feature>
<feature type="topological domain" description="Extracellular" evidence="4">
    <location>
        <begin position="105"/>
        <end position="115"/>
    </location>
</feature>
<feature type="transmembrane region" description="Helical" evidence="3">
    <location>
        <begin position="116"/>
        <end position="136"/>
    </location>
</feature>
<feature type="topological domain" description="Cytoplasmic" evidence="4">
    <location>
        <begin position="137"/>
        <end position="153"/>
    </location>
</feature>
<feature type="transmembrane region" description="Helical" evidence="3">
    <location>
        <begin position="154"/>
        <end position="174"/>
    </location>
</feature>
<feature type="topological domain" description="Extracellular" evidence="4">
    <location>
        <begin position="175"/>
        <end position="177"/>
    </location>
</feature>
<feature type="transmembrane region" description="Helical" evidence="3">
    <location>
        <begin position="178"/>
        <end position="198"/>
    </location>
</feature>
<feature type="topological domain" description="Cytoplasmic" evidence="2">
    <location>
        <begin position="199"/>
        <end position="232"/>
    </location>
</feature>
<feature type="glycosylation site" description="N-linked (GlcNAc...) asparagine" evidence="3">
    <location>
        <position position="29"/>
    </location>
</feature>
<feature type="glycosylation site" description="N-linked (GlcNAc...) asparagine" evidence="3">
    <location>
        <position position="33"/>
    </location>
</feature>
<keyword id="KW-0072">Autophagy</keyword>
<keyword id="KW-1003">Cell membrane</keyword>
<keyword id="KW-0968">Cytoplasmic vesicle</keyword>
<keyword id="KW-0967">Endosome</keyword>
<keyword id="KW-0325">Glycoprotein</keyword>
<keyword id="KW-0472">Membrane</keyword>
<keyword id="KW-1185">Reference proteome</keyword>
<keyword id="KW-0812">Transmembrane</keyword>
<keyword id="KW-1133">Transmembrane helix</keyword>
<dbReference type="EMBL" id="BC108083">
    <property type="protein sequence ID" value="AAI08084.1"/>
    <property type="molecule type" value="mRNA"/>
</dbReference>
<dbReference type="RefSeq" id="NP_001032458.1">
    <property type="nucleotide sequence ID" value="NM_001037381.1"/>
</dbReference>
<dbReference type="FunCoup" id="Q32PK2">
    <property type="interactions" value="28"/>
</dbReference>
<dbReference type="STRING" id="7955.ENSDARP00000073041"/>
<dbReference type="GlyCosmos" id="Q32PK2">
    <property type="glycosylation" value="2 sites, No reported glycans"/>
</dbReference>
<dbReference type="PaxDb" id="7955-ENSDARP00000073041"/>
<dbReference type="GeneID" id="556933"/>
<dbReference type="KEGG" id="dre:556933"/>
<dbReference type="AGR" id="ZFIN:ZDB-GENE-051113-144"/>
<dbReference type="CTD" id="284417"/>
<dbReference type="ZFIN" id="ZDB-GENE-051113-144">
    <property type="gene designation" value="tmem150b"/>
</dbReference>
<dbReference type="eggNOG" id="KOG4320">
    <property type="taxonomic scope" value="Eukaryota"/>
</dbReference>
<dbReference type="InParanoid" id="Q32PK2"/>
<dbReference type="OrthoDB" id="191706at2759"/>
<dbReference type="PhylomeDB" id="Q32PK2"/>
<dbReference type="PRO" id="PR:Q32PK2"/>
<dbReference type="Proteomes" id="UP000000437">
    <property type="component" value="Alternate scaffold 3"/>
</dbReference>
<dbReference type="Proteomes" id="UP000000437">
    <property type="component" value="Chromosome 3"/>
</dbReference>
<dbReference type="GO" id="GO:0000421">
    <property type="term" value="C:autophagosome membrane"/>
    <property type="evidence" value="ECO:0007669"/>
    <property type="project" value="UniProtKB-SubCell"/>
</dbReference>
<dbReference type="GO" id="GO:0010008">
    <property type="term" value="C:endosome membrane"/>
    <property type="evidence" value="ECO:0007669"/>
    <property type="project" value="UniProtKB-SubCell"/>
</dbReference>
<dbReference type="GO" id="GO:0005886">
    <property type="term" value="C:plasma membrane"/>
    <property type="evidence" value="ECO:0000250"/>
    <property type="project" value="UniProtKB"/>
</dbReference>
<dbReference type="GO" id="GO:0006914">
    <property type="term" value="P:autophagy"/>
    <property type="evidence" value="ECO:0007669"/>
    <property type="project" value="UniProtKB-KW"/>
</dbReference>
<dbReference type="InterPro" id="IPR050911">
    <property type="entry name" value="DRAM/TMEM150_Autophagy_Mod"/>
</dbReference>
<dbReference type="InterPro" id="IPR019402">
    <property type="entry name" value="Frag1/DRAM/Sfk1"/>
</dbReference>
<dbReference type="PANTHER" id="PTHR21324">
    <property type="entry name" value="FASTING-INDUCIBLE INTEGRAL MEMBRANE PROTEIN TM6P1-RELATED"/>
    <property type="match status" value="1"/>
</dbReference>
<dbReference type="PANTHER" id="PTHR21324:SF3">
    <property type="entry name" value="MODULATOR OF MACROAUTOPHAGY TMEM150B"/>
    <property type="match status" value="1"/>
</dbReference>
<dbReference type="Pfam" id="PF10277">
    <property type="entry name" value="Frag1"/>
    <property type="match status" value="1"/>
</dbReference>
<protein>
    <recommendedName>
        <fullName evidence="4">Modulator of macroautophagy TMEM150B</fullName>
    </recommendedName>
    <alternativeName>
        <fullName evidence="1">Transmembrane protein 150B</fullName>
    </alternativeName>
</protein>
<accession>Q32PK2</accession>
<reference key="1">
    <citation type="submission" date="2005-10" db="EMBL/GenBank/DDBJ databases">
        <authorList>
            <consortium name="NIH - Zebrafish Gene Collection (ZGC) project"/>
        </authorList>
    </citation>
    <scope>NUCLEOTIDE SEQUENCE [LARGE SCALE MRNA]</scope>
    <source>
        <tissue>Larva</tissue>
    </source>
</reference>
<organism>
    <name type="scientific">Danio rerio</name>
    <name type="common">Zebrafish</name>
    <name type="synonym">Brachydanio rerio</name>
    <dbReference type="NCBI Taxonomy" id="7955"/>
    <lineage>
        <taxon>Eukaryota</taxon>
        <taxon>Metazoa</taxon>
        <taxon>Chordata</taxon>
        <taxon>Craniata</taxon>
        <taxon>Vertebrata</taxon>
        <taxon>Euteleostomi</taxon>
        <taxon>Actinopterygii</taxon>
        <taxon>Neopterygii</taxon>
        <taxon>Teleostei</taxon>
        <taxon>Ostariophysi</taxon>
        <taxon>Cypriniformes</taxon>
        <taxon>Danionidae</taxon>
        <taxon>Danioninae</taxon>
        <taxon>Danio</taxon>
    </lineage>
</organism>
<proteinExistence type="evidence at transcript level"/>
<gene>
    <name evidence="1" type="primary">tmem150b</name>
    <name type="ORF">zgc:123244</name>
</gene>
<name>T150B_DANRE</name>
<evidence type="ECO:0000250" key="1">
    <source>
        <dbReference type="UniProtKB" id="A6NC51"/>
    </source>
</evidence>
<evidence type="ECO:0000250" key="2">
    <source>
        <dbReference type="UniProtKB" id="Q86TG1"/>
    </source>
</evidence>
<evidence type="ECO:0000255" key="3"/>
<evidence type="ECO:0000305" key="4"/>
<sequence length="232" mass="26016">MWAWALLPVFLAVFGTVGLWAVYAIAVSNNSVNITIEFPYISTCGAYTPQSCLFAQICNICCVLALWIVVIRFQQIRDLGRSSHLNTAGLVLGFISSIGISILGNFQQTIIQEVHLLGALMAFFLGLAYFWIQAFITYFSPPSRDNKWLVPVRFVLCSQCTCMVICMFVLHSTGFRSAAAICEWILVMCFFALFGVFAAEFRHIDFHKLTVQKEGLKVANNDNVVWTVQDVQ</sequence>
<comment type="function">
    <text evidence="1">Modulator of macroautophagy that causes accumulation of autophagosomes under basal conditions and enhances autophagic flux (By similarity). Represses cell death and promotes long-term clonogenic survival of cells grown in the absence of glucose in a macroautophagy-independent manner (By similarity). May have some role in extracellular matrix engulfment or growth factor receptor recycling, both of which can modulate cell survival (By similarity).</text>
</comment>
<comment type="subcellular location">
    <subcellularLocation>
        <location evidence="1">Cell membrane</location>
        <topology evidence="1">Multi-pass membrane protein</topology>
    </subcellularLocation>
    <subcellularLocation>
        <location evidence="1">Endosome membrane</location>
        <topology evidence="3">Multi-pass membrane protein</topology>
    </subcellularLocation>
    <subcellularLocation>
        <location evidence="1">Cytoplasmic vesicle</location>
        <location evidence="1">Autophagosome membrane</location>
        <topology evidence="3">Multi-pass membrane protein</topology>
    </subcellularLocation>
</comment>
<comment type="similarity">
    <text evidence="4">Belongs to the DRAM/TMEM150 family.</text>
</comment>